<reference key="1">
    <citation type="journal article" date="2004" name="J. Mol. Microbiol. Biotechnol.">
        <title>The complete genome sequence of Bacillus licheniformis DSM13, an organism with great industrial potential.</title>
        <authorList>
            <person name="Veith B."/>
            <person name="Herzberg C."/>
            <person name="Steckel S."/>
            <person name="Feesche J."/>
            <person name="Maurer K.H."/>
            <person name="Ehrenreich P."/>
            <person name="Baeumer S."/>
            <person name="Henne A."/>
            <person name="Liesegang H."/>
            <person name="Merkl R."/>
            <person name="Ehrenreich A."/>
            <person name="Gottschalk G."/>
        </authorList>
    </citation>
    <scope>NUCLEOTIDE SEQUENCE [LARGE SCALE GENOMIC DNA]</scope>
    <source>
        <strain>ATCC 14580 / DSM 13 / JCM 2505 / CCUG 7422 / NBRC 12200 / NCIMB 9375 / NCTC 10341 / NRRL NRS-1264 / Gibson 46</strain>
    </source>
</reference>
<reference key="2">
    <citation type="journal article" date="2004" name="Genome Biol.">
        <title>Complete genome sequence of the industrial bacterium Bacillus licheniformis and comparisons with closely related Bacillus species.</title>
        <authorList>
            <person name="Rey M.W."/>
            <person name="Ramaiya P."/>
            <person name="Nelson B.A."/>
            <person name="Brody-Karpin S.D."/>
            <person name="Zaretsky E.J."/>
            <person name="Tang M."/>
            <person name="Lopez de Leon A."/>
            <person name="Xiang H."/>
            <person name="Gusti V."/>
            <person name="Clausen I.G."/>
            <person name="Olsen P.B."/>
            <person name="Rasmussen M.D."/>
            <person name="Andersen J.T."/>
            <person name="Joergensen P.L."/>
            <person name="Larsen T.S."/>
            <person name="Sorokin A."/>
            <person name="Bolotin A."/>
            <person name="Lapidus A."/>
            <person name="Galleron N."/>
            <person name="Ehrlich S.D."/>
            <person name="Berka R.M."/>
        </authorList>
    </citation>
    <scope>NUCLEOTIDE SEQUENCE [LARGE SCALE GENOMIC DNA]</scope>
    <source>
        <strain>ATCC 14580 / DSM 13 / JCM 2505 / CCUG 7422 / NBRC 12200 / NCIMB 9375 / NCTC 10341 / NRRL NRS-1264 / Gibson 46</strain>
    </source>
</reference>
<keyword id="KW-1185">Reference proteome</keyword>
<gene>
    <name type="ordered locus">BLi02393</name>
    <name type="ordered locus">BL02764</name>
</gene>
<feature type="chain" id="PRO_1000046727" description="UPF0302 protein BLi02393/BL02764">
    <location>
        <begin position="1"/>
        <end position="179"/>
    </location>
</feature>
<proteinExistence type="inferred from homology"/>
<name>Y2764_BACLD</name>
<protein>
    <recommendedName>
        <fullName evidence="1">UPF0302 protein BLi02393/BL02764</fullName>
    </recommendedName>
</protein>
<comment type="similarity">
    <text evidence="1">Belongs to the UPF0302 family.</text>
</comment>
<sequence length="179" mass="21482">MQTPVSVNEKKDFIRWFLNHYQLKRRECVWILNYLMSHDSLMEKVHFVEQAEFCPRGIIMSTHCVEEVPFRFYKENVMTTDAEKSFHDIRLNKQQDLFIQLNFRSAYNSPEYAAVLEANPHIPKDLYENEKDKIVAEQILEHSIATFQRQKLLREIDEALDRQDKESFEKLAKQLSQLR</sequence>
<dbReference type="EMBL" id="CP000002">
    <property type="protein sequence ID" value="AAU23918.1"/>
    <property type="molecule type" value="Genomic_DNA"/>
</dbReference>
<dbReference type="EMBL" id="AE017333">
    <property type="protein sequence ID" value="AAU41273.1"/>
    <property type="molecule type" value="Genomic_DNA"/>
</dbReference>
<dbReference type="RefSeq" id="WP_003182958.1">
    <property type="nucleotide sequence ID" value="NC_006322.1"/>
</dbReference>
<dbReference type="SMR" id="Q65I41"/>
<dbReference type="STRING" id="279010.BL02764"/>
<dbReference type="KEGG" id="bld:BLi02393"/>
<dbReference type="KEGG" id="bli:BL02764"/>
<dbReference type="eggNOG" id="COG5582">
    <property type="taxonomic scope" value="Bacteria"/>
</dbReference>
<dbReference type="HOGENOM" id="CLU_126019_0_0_9"/>
<dbReference type="Proteomes" id="UP000000606">
    <property type="component" value="Chromosome"/>
</dbReference>
<dbReference type="Gene3D" id="3.40.1530.30">
    <property type="entry name" value="Uncharacterised family UPF0302, N-terminal domain"/>
    <property type="match status" value="1"/>
</dbReference>
<dbReference type="Gene3D" id="4.10.810.10">
    <property type="entry name" value="Virus Scaffolding Protein, Chain A"/>
    <property type="match status" value="1"/>
</dbReference>
<dbReference type="HAMAP" id="MF_00760">
    <property type="entry name" value="UPF0302"/>
    <property type="match status" value="1"/>
</dbReference>
<dbReference type="InterPro" id="IPR014957">
    <property type="entry name" value="IDEAL_dom"/>
</dbReference>
<dbReference type="InterPro" id="IPR011188">
    <property type="entry name" value="UPF0302"/>
</dbReference>
<dbReference type="InterPro" id="IPR014963">
    <property type="entry name" value="UPF0302_N"/>
</dbReference>
<dbReference type="InterPro" id="IPR038091">
    <property type="entry name" value="UPF0302_N_sf"/>
</dbReference>
<dbReference type="InterPro" id="IPR027393">
    <property type="entry name" value="Virus_scaffolding_prot_C"/>
</dbReference>
<dbReference type="NCBIfam" id="NF002965">
    <property type="entry name" value="PRK03636.1"/>
    <property type="match status" value="1"/>
</dbReference>
<dbReference type="Pfam" id="PF08858">
    <property type="entry name" value="IDEAL"/>
    <property type="match status" value="1"/>
</dbReference>
<dbReference type="Pfam" id="PF08864">
    <property type="entry name" value="UPF0302"/>
    <property type="match status" value="1"/>
</dbReference>
<dbReference type="PIRSF" id="PIRSF007165">
    <property type="entry name" value="UCP007165"/>
    <property type="match status" value="1"/>
</dbReference>
<dbReference type="SMART" id="SM00914">
    <property type="entry name" value="IDEAL"/>
    <property type="match status" value="1"/>
</dbReference>
<organism>
    <name type="scientific">Bacillus licheniformis (strain ATCC 14580 / DSM 13 / JCM 2505 / CCUG 7422 / NBRC 12200 / NCIMB 9375 / NCTC 10341 / NRRL NRS-1264 / Gibson 46)</name>
    <dbReference type="NCBI Taxonomy" id="279010"/>
    <lineage>
        <taxon>Bacteria</taxon>
        <taxon>Bacillati</taxon>
        <taxon>Bacillota</taxon>
        <taxon>Bacilli</taxon>
        <taxon>Bacillales</taxon>
        <taxon>Bacillaceae</taxon>
        <taxon>Bacillus</taxon>
    </lineage>
</organism>
<accession>Q65I41</accession>
<accession>Q62TJ1</accession>
<evidence type="ECO:0000255" key="1">
    <source>
        <dbReference type="HAMAP-Rule" id="MF_00760"/>
    </source>
</evidence>